<accession>P65353</accession>
<accession>A0A1R3Y215</accession>
<accession>O33232</accession>
<accession>X2BLQ5</accession>
<feature type="chain" id="PRO_0000163939" description="tRNA dimethylallyltransferase">
    <location>
        <begin position="1"/>
        <end position="314"/>
    </location>
</feature>
<feature type="binding site" evidence="1">
    <location>
        <begin position="8"/>
        <end position="15"/>
    </location>
    <ligand>
        <name>ATP</name>
        <dbReference type="ChEBI" id="CHEBI:30616"/>
    </ligand>
</feature>
<feature type="binding site" evidence="1">
    <location>
        <begin position="10"/>
        <end position="15"/>
    </location>
    <ligand>
        <name>substrate</name>
    </ligand>
</feature>
<feature type="site" description="Interaction with substrate tRNA" evidence="1">
    <location>
        <position position="103"/>
    </location>
</feature>
<feature type="site" description="Interaction with substrate tRNA" evidence="1">
    <location>
        <position position="124"/>
    </location>
</feature>
<proteinExistence type="inferred from homology"/>
<dbReference type="EC" id="2.5.1.75" evidence="1"/>
<dbReference type="EMBL" id="LT708304">
    <property type="protein sequence ID" value="SIU01364.1"/>
    <property type="molecule type" value="Genomic_DNA"/>
</dbReference>
<dbReference type="RefSeq" id="NP_856392.1">
    <property type="nucleotide sequence ID" value="NC_002945.3"/>
</dbReference>
<dbReference type="RefSeq" id="WP_003413989.1">
    <property type="nucleotide sequence ID" value="NC_002945.4"/>
</dbReference>
<dbReference type="SMR" id="P65353"/>
<dbReference type="GeneID" id="45426714"/>
<dbReference type="KEGG" id="mbo:BQ2027_MB2746C"/>
<dbReference type="PATRIC" id="fig|233413.5.peg.3008"/>
<dbReference type="Proteomes" id="UP000001419">
    <property type="component" value="Chromosome"/>
</dbReference>
<dbReference type="GO" id="GO:0005524">
    <property type="term" value="F:ATP binding"/>
    <property type="evidence" value="ECO:0007669"/>
    <property type="project" value="UniProtKB-UniRule"/>
</dbReference>
<dbReference type="GO" id="GO:0052381">
    <property type="term" value="F:tRNA dimethylallyltransferase activity"/>
    <property type="evidence" value="ECO:0007669"/>
    <property type="project" value="UniProtKB-UniRule"/>
</dbReference>
<dbReference type="GO" id="GO:0006400">
    <property type="term" value="P:tRNA modification"/>
    <property type="evidence" value="ECO:0007669"/>
    <property type="project" value="TreeGrafter"/>
</dbReference>
<dbReference type="FunFam" id="1.10.20.140:FF:000001">
    <property type="entry name" value="tRNA dimethylallyltransferase"/>
    <property type="match status" value="1"/>
</dbReference>
<dbReference type="Gene3D" id="1.10.20.140">
    <property type="match status" value="1"/>
</dbReference>
<dbReference type="Gene3D" id="3.40.50.300">
    <property type="entry name" value="P-loop containing nucleotide triphosphate hydrolases"/>
    <property type="match status" value="1"/>
</dbReference>
<dbReference type="HAMAP" id="MF_00185">
    <property type="entry name" value="IPP_trans"/>
    <property type="match status" value="1"/>
</dbReference>
<dbReference type="InterPro" id="IPR039657">
    <property type="entry name" value="Dimethylallyltransferase"/>
</dbReference>
<dbReference type="InterPro" id="IPR018022">
    <property type="entry name" value="IPT"/>
</dbReference>
<dbReference type="InterPro" id="IPR027417">
    <property type="entry name" value="P-loop_NTPase"/>
</dbReference>
<dbReference type="NCBIfam" id="TIGR00174">
    <property type="entry name" value="miaA"/>
    <property type="match status" value="1"/>
</dbReference>
<dbReference type="PANTHER" id="PTHR11088">
    <property type="entry name" value="TRNA DIMETHYLALLYLTRANSFERASE"/>
    <property type="match status" value="1"/>
</dbReference>
<dbReference type="PANTHER" id="PTHR11088:SF60">
    <property type="entry name" value="TRNA DIMETHYLALLYLTRANSFERASE"/>
    <property type="match status" value="1"/>
</dbReference>
<dbReference type="Pfam" id="PF01715">
    <property type="entry name" value="IPPT"/>
    <property type="match status" value="1"/>
</dbReference>
<dbReference type="SUPFAM" id="SSF52540">
    <property type="entry name" value="P-loop containing nucleoside triphosphate hydrolases"/>
    <property type="match status" value="1"/>
</dbReference>
<name>MIAA_MYCBO</name>
<protein>
    <recommendedName>
        <fullName evidence="1">tRNA dimethylallyltransferase</fullName>
        <ecNumber evidence="1">2.5.1.75</ecNumber>
    </recommendedName>
    <alternativeName>
        <fullName evidence="1">Dimethylallyl diphosphate:tRNA dimethylallyltransferase</fullName>
        <shortName evidence="1">DMAPP:tRNA dimethylallyltransferase</shortName>
        <shortName evidence="1">DMATase</shortName>
    </alternativeName>
    <alternativeName>
        <fullName evidence="1">Isopentenyl-diphosphate:tRNA isopentenyltransferase</fullName>
        <shortName evidence="1">IPP transferase</shortName>
        <shortName evidence="1">IPPT</shortName>
        <shortName evidence="1">IPTase</shortName>
    </alternativeName>
</protein>
<organism>
    <name type="scientific">Mycobacterium bovis (strain ATCC BAA-935 / AF2122/97)</name>
    <dbReference type="NCBI Taxonomy" id="233413"/>
    <lineage>
        <taxon>Bacteria</taxon>
        <taxon>Bacillati</taxon>
        <taxon>Actinomycetota</taxon>
        <taxon>Actinomycetes</taxon>
        <taxon>Mycobacteriales</taxon>
        <taxon>Mycobacteriaceae</taxon>
        <taxon>Mycobacterium</taxon>
        <taxon>Mycobacterium tuberculosis complex</taxon>
    </lineage>
</organism>
<reference key="1">
    <citation type="journal article" date="2003" name="Proc. Natl. Acad. Sci. U.S.A.">
        <title>The complete genome sequence of Mycobacterium bovis.</title>
        <authorList>
            <person name="Garnier T."/>
            <person name="Eiglmeier K."/>
            <person name="Camus J.-C."/>
            <person name="Medina N."/>
            <person name="Mansoor H."/>
            <person name="Pryor M."/>
            <person name="Duthoy S."/>
            <person name="Grondin S."/>
            <person name="Lacroix C."/>
            <person name="Monsempe C."/>
            <person name="Simon S."/>
            <person name="Harris B."/>
            <person name="Atkin R."/>
            <person name="Doggett J."/>
            <person name="Mayes R."/>
            <person name="Keating L."/>
            <person name="Wheeler P.R."/>
            <person name="Parkhill J."/>
            <person name="Barrell B.G."/>
            <person name="Cole S.T."/>
            <person name="Gordon S.V."/>
            <person name="Hewinson R.G."/>
        </authorList>
    </citation>
    <scope>NUCLEOTIDE SEQUENCE [LARGE SCALE GENOMIC DNA]</scope>
    <source>
        <strain>ATCC BAA-935 / AF2122/97</strain>
    </source>
</reference>
<reference key="2">
    <citation type="journal article" date="2017" name="Genome Announc.">
        <title>Updated reference genome sequence and annotation of Mycobacterium bovis AF2122/97.</title>
        <authorList>
            <person name="Malone K.M."/>
            <person name="Farrell D."/>
            <person name="Stuber T.P."/>
            <person name="Schubert O.T."/>
            <person name="Aebersold R."/>
            <person name="Robbe-Austerman S."/>
            <person name="Gordon S.V."/>
        </authorList>
    </citation>
    <scope>NUCLEOTIDE SEQUENCE [LARGE SCALE GENOMIC DNA]</scope>
    <scope>GENOME REANNOTATION</scope>
    <source>
        <strain>ATCC BAA-935 / AF2122/97</strain>
    </source>
</reference>
<keyword id="KW-0067">ATP-binding</keyword>
<keyword id="KW-0460">Magnesium</keyword>
<keyword id="KW-0547">Nucleotide-binding</keyword>
<keyword id="KW-1185">Reference proteome</keyword>
<keyword id="KW-0808">Transferase</keyword>
<keyword id="KW-0819">tRNA processing</keyword>
<gene>
    <name evidence="1" type="primary">miaA</name>
    <name type="ordered locus">BQ2027_MB2746C</name>
</gene>
<comment type="function">
    <text evidence="1">Catalyzes the transfer of a dimethylallyl group onto the adenine at position 37 in tRNAs that read codons beginning with uridine, leading to the formation of N6-(dimethylallyl)adenosine (i(6)A).</text>
</comment>
<comment type="catalytic activity">
    <reaction evidence="1">
        <text>adenosine(37) in tRNA + dimethylallyl diphosphate = N(6)-dimethylallyladenosine(37) in tRNA + diphosphate</text>
        <dbReference type="Rhea" id="RHEA:26482"/>
        <dbReference type="Rhea" id="RHEA-COMP:10162"/>
        <dbReference type="Rhea" id="RHEA-COMP:10375"/>
        <dbReference type="ChEBI" id="CHEBI:33019"/>
        <dbReference type="ChEBI" id="CHEBI:57623"/>
        <dbReference type="ChEBI" id="CHEBI:74411"/>
        <dbReference type="ChEBI" id="CHEBI:74415"/>
        <dbReference type="EC" id="2.5.1.75"/>
    </reaction>
</comment>
<comment type="cofactor">
    <cofactor evidence="1">
        <name>Mg(2+)</name>
        <dbReference type="ChEBI" id="CHEBI:18420"/>
    </cofactor>
</comment>
<comment type="subunit">
    <text evidence="1">Monomer.</text>
</comment>
<comment type="similarity">
    <text evidence="1">Belongs to the IPP transferase family.</text>
</comment>
<evidence type="ECO:0000255" key="1">
    <source>
        <dbReference type="HAMAP-Rule" id="MF_00185"/>
    </source>
</evidence>
<sequence length="314" mass="34446">MRPLAIIGPTGAGKSQLALDVAARLGARVSVEIVNADAMQLYRGMDIGTAKLPVSERRGIPHHQLDVLDVTETATVARYQRAAAADIEAIAARGAVPVVVGGSMLYVQSLLDDWSFPATDPSVRARWERRLAEVGVDRLHAELARRDPAAAAAILPTDARRTVRALEVVELTGQPFAASAPRIGAPRWDTVIVGLDCQTTILDERLARRTDLMFDQGLVEEVRTLLRNGLREGVTASRALGYAQVIAALDAGAGADMMRAAREQTYLGTRRYVRRQRSWFRRDHRVHWLDAGVASSPDRARLVDDAVRLWRHVT</sequence>